<organism>
    <name type="scientific">Pseudomonas savastanoi pv. phaseolicola (strain 1448A / Race 6)</name>
    <name type="common">Pseudomonas syringae pv. phaseolicola (strain 1448A / Race 6)</name>
    <dbReference type="NCBI Taxonomy" id="264730"/>
    <lineage>
        <taxon>Bacteria</taxon>
        <taxon>Pseudomonadati</taxon>
        <taxon>Pseudomonadota</taxon>
        <taxon>Gammaproteobacteria</taxon>
        <taxon>Pseudomonadales</taxon>
        <taxon>Pseudomonadaceae</taxon>
        <taxon>Pseudomonas</taxon>
    </lineage>
</organism>
<name>ISPE_PSE14</name>
<keyword id="KW-0067">ATP-binding</keyword>
<keyword id="KW-0414">Isoprene biosynthesis</keyword>
<keyword id="KW-0418">Kinase</keyword>
<keyword id="KW-0547">Nucleotide-binding</keyword>
<keyword id="KW-0808">Transferase</keyword>
<accession>Q48MV8</accession>
<protein>
    <recommendedName>
        <fullName evidence="1">4-diphosphocytidyl-2-C-methyl-D-erythritol kinase</fullName>
        <shortName evidence="1">CMK</shortName>
        <ecNumber evidence="1">2.7.1.148</ecNumber>
    </recommendedName>
    <alternativeName>
        <fullName evidence="1">4-(cytidine-5'-diphospho)-2-C-methyl-D-erythritol kinase</fullName>
    </alternativeName>
</protein>
<proteinExistence type="inferred from homology"/>
<feature type="chain" id="PRO_0000235120" description="4-diphosphocytidyl-2-C-methyl-D-erythritol kinase">
    <location>
        <begin position="1"/>
        <end position="288"/>
    </location>
</feature>
<feature type="active site" evidence="1">
    <location>
        <position position="19"/>
    </location>
</feature>
<feature type="active site" evidence="1">
    <location>
        <position position="144"/>
    </location>
</feature>
<feature type="binding site" evidence="1">
    <location>
        <begin position="102"/>
        <end position="112"/>
    </location>
    <ligand>
        <name>ATP</name>
        <dbReference type="ChEBI" id="CHEBI:30616"/>
    </ligand>
</feature>
<gene>
    <name evidence="1" type="primary">ispE</name>
    <name type="ordered locus">PSPPH_0993</name>
</gene>
<evidence type="ECO:0000255" key="1">
    <source>
        <dbReference type="HAMAP-Rule" id="MF_00061"/>
    </source>
</evidence>
<sequence length="288" mass="31255">MTALQDMAKAQLVLPAPAKLNLMLHILGRRPDGYHELQTLFQFLDYGDELGFTVREDGEIRLQTDVPGVPHDSNLIVKAARALQKQSGCTLGMDIWLEKRLPMGGGIGGGSSDAATTLLALNHLWQLGWDEDRLAQLGLTLGADVPVFVRGHAAFAEGVGEILTPVDPEEPWYLVLVPQVAVSTAEIFSDPLLTRDTPPIKVRPVPKGNSRNDCKAVVERRYPEVRNALNLLGNFTEAKLTGTGSCVFGAFPNKAEADKVSALLTETLTGFVAKGSNISMLHRKLQIL</sequence>
<dbReference type="EC" id="2.7.1.148" evidence="1"/>
<dbReference type="EMBL" id="CP000058">
    <property type="protein sequence ID" value="AAZ37323.1"/>
    <property type="molecule type" value="Genomic_DNA"/>
</dbReference>
<dbReference type="SMR" id="Q48MV8"/>
<dbReference type="KEGG" id="psp:PSPPH_0993"/>
<dbReference type="eggNOG" id="COG1947">
    <property type="taxonomic scope" value="Bacteria"/>
</dbReference>
<dbReference type="HOGENOM" id="CLU_053057_3_0_6"/>
<dbReference type="UniPathway" id="UPA00056">
    <property type="reaction ID" value="UER00094"/>
</dbReference>
<dbReference type="Proteomes" id="UP000000551">
    <property type="component" value="Chromosome"/>
</dbReference>
<dbReference type="GO" id="GO:0050515">
    <property type="term" value="F:4-(cytidine 5'-diphospho)-2-C-methyl-D-erythritol kinase activity"/>
    <property type="evidence" value="ECO:0007669"/>
    <property type="project" value="UniProtKB-UniRule"/>
</dbReference>
<dbReference type="GO" id="GO:0005524">
    <property type="term" value="F:ATP binding"/>
    <property type="evidence" value="ECO:0007669"/>
    <property type="project" value="UniProtKB-UniRule"/>
</dbReference>
<dbReference type="GO" id="GO:0019288">
    <property type="term" value="P:isopentenyl diphosphate biosynthetic process, methylerythritol 4-phosphate pathway"/>
    <property type="evidence" value="ECO:0007669"/>
    <property type="project" value="UniProtKB-UniRule"/>
</dbReference>
<dbReference type="GO" id="GO:0016114">
    <property type="term" value="P:terpenoid biosynthetic process"/>
    <property type="evidence" value="ECO:0007669"/>
    <property type="project" value="InterPro"/>
</dbReference>
<dbReference type="FunFam" id="3.30.230.10:FF:000022">
    <property type="entry name" value="4-diphosphocytidyl-2-C-methyl-D-erythritol kinase"/>
    <property type="match status" value="1"/>
</dbReference>
<dbReference type="Gene3D" id="3.30.230.10">
    <property type="match status" value="1"/>
</dbReference>
<dbReference type="Gene3D" id="3.30.70.890">
    <property type="entry name" value="GHMP kinase, C-terminal domain"/>
    <property type="match status" value="1"/>
</dbReference>
<dbReference type="HAMAP" id="MF_00061">
    <property type="entry name" value="IspE"/>
    <property type="match status" value="1"/>
</dbReference>
<dbReference type="InterPro" id="IPR013750">
    <property type="entry name" value="GHMP_kinase_C_dom"/>
</dbReference>
<dbReference type="InterPro" id="IPR036554">
    <property type="entry name" value="GHMP_kinase_C_sf"/>
</dbReference>
<dbReference type="InterPro" id="IPR006204">
    <property type="entry name" value="GHMP_kinase_N_dom"/>
</dbReference>
<dbReference type="InterPro" id="IPR004424">
    <property type="entry name" value="IspE"/>
</dbReference>
<dbReference type="InterPro" id="IPR020568">
    <property type="entry name" value="Ribosomal_Su5_D2-typ_SF"/>
</dbReference>
<dbReference type="InterPro" id="IPR014721">
    <property type="entry name" value="Ribsml_uS5_D2-typ_fold_subgr"/>
</dbReference>
<dbReference type="NCBIfam" id="TIGR00154">
    <property type="entry name" value="ispE"/>
    <property type="match status" value="1"/>
</dbReference>
<dbReference type="PANTHER" id="PTHR43527">
    <property type="entry name" value="4-DIPHOSPHOCYTIDYL-2-C-METHYL-D-ERYTHRITOL KINASE, CHLOROPLASTIC"/>
    <property type="match status" value="1"/>
</dbReference>
<dbReference type="PANTHER" id="PTHR43527:SF2">
    <property type="entry name" value="4-DIPHOSPHOCYTIDYL-2-C-METHYL-D-ERYTHRITOL KINASE, CHLOROPLASTIC"/>
    <property type="match status" value="1"/>
</dbReference>
<dbReference type="Pfam" id="PF08544">
    <property type="entry name" value="GHMP_kinases_C"/>
    <property type="match status" value="1"/>
</dbReference>
<dbReference type="Pfam" id="PF00288">
    <property type="entry name" value="GHMP_kinases_N"/>
    <property type="match status" value="1"/>
</dbReference>
<dbReference type="PIRSF" id="PIRSF010376">
    <property type="entry name" value="IspE"/>
    <property type="match status" value="1"/>
</dbReference>
<dbReference type="SUPFAM" id="SSF55060">
    <property type="entry name" value="GHMP Kinase, C-terminal domain"/>
    <property type="match status" value="1"/>
</dbReference>
<dbReference type="SUPFAM" id="SSF54211">
    <property type="entry name" value="Ribosomal protein S5 domain 2-like"/>
    <property type="match status" value="1"/>
</dbReference>
<reference key="1">
    <citation type="journal article" date="2005" name="J. Bacteriol.">
        <title>Whole-genome sequence analysis of Pseudomonas syringae pv. phaseolicola 1448A reveals divergence among pathovars in genes involved in virulence and transposition.</title>
        <authorList>
            <person name="Joardar V."/>
            <person name="Lindeberg M."/>
            <person name="Jackson R.W."/>
            <person name="Selengut J."/>
            <person name="Dodson R."/>
            <person name="Brinkac L.M."/>
            <person name="Daugherty S.C."/>
            <person name="DeBoy R.T."/>
            <person name="Durkin A.S."/>
            <person name="Gwinn Giglio M."/>
            <person name="Madupu R."/>
            <person name="Nelson W.C."/>
            <person name="Rosovitz M.J."/>
            <person name="Sullivan S.A."/>
            <person name="Crabtree J."/>
            <person name="Creasy T."/>
            <person name="Davidsen T.M."/>
            <person name="Haft D.H."/>
            <person name="Zafar N."/>
            <person name="Zhou L."/>
            <person name="Halpin R."/>
            <person name="Holley T."/>
            <person name="Khouri H.M."/>
            <person name="Feldblyum T.V."/>
            <person name="White O."/>
            <person name="Fraser C.M."/>
            <person name="Chatterjee A.K."/>
            <person name="Cartinhour S."/>
            <person name="Schneider D."/>
            <person name="Mansfield J.W."/>
            <person name="Collmer A."/>
            <person name="Buell R."/>
        </authorList>
    </citation>
    <scope>NUCLEOTIDE SEQUENCE [LARGE SCALE GENOMIC DNA]</scope>
    <source>
        <strain>1448A / Race 6</strain>
    </source>
</reference>
<comment type="function">
    <text evidence="1">Catalyzes the phosphorylation of the position 2 hydroxy group of 4-diphosphocytidyl-2C-methyl-D-erythritol.</text>
</comment>
<comment type="catalytic activity">
    <reaction evidence="1">
        <text>4-CDP-2-C-methyl-D-erythritol + ATP = 4-CDP-2-C-methyl-D-erythritol 2-phosphate + ADP + H(+)</text>
        <dbReference type="Rhea" id="RHEA:18437"/>
        <dbReference type="ChEBI" id="CHEBI:15378"/>
        <dbReference type="ChEBI" id="CHEBI:30616"/>
        <dbReference type="ChEBI" id="CHEBI:57823"/>
        <dbReference type="ChEBI" id="CHEBI:57919"/>
        <dbReference type="ChEBI" id="CHEBI:456216"/>
        <dbReference type="EC" id="2.7.1.148"/>
    </reaction>
</comment>
<comment type="pathway">
    <text evidence="1">Isoprenoid biosynthesis; isopentenyl diphosphate biosynthesis via DXP pathway; isopentenyl diphosphate from 1-deoxy-D-xylulose 5-phosphate: step 3/6.</text>
</comment>
<comment type="similarity">
    <text evidence="1">Belongs to the GHMP kinase family. IspE subfamily.</text>
</comment>